<proteinExistence type="inferred from homology"/>
<dbReference type="EMBL" id="CP000958">
    <property type="protein sequence ID" value="ACA91094.1"/>
    <property type="molecule type" value="Genomic_DNA"/>
</dbReference>
<dbReference type="RefSeq" id="WP_006478589.1">
    <property type="nucleotide sequence ID" value="NC_010508.1"/>
</dbReference>
<dbReference type="GeneID" id="83048706"/>
<dbReference type="KEGG" id="bcm:Bcenmc03_1933"/>
<dbReference type="HOGENOM" id="CLU_089554_2_0_4"/>
<dbReference type="Proteomes" id="UP000002169">
    <property type="component" value="Chromosome 1"/>
</dbReference>
<dbReference type="GO" id="GO:0005886">
    <property type="term" value="C:plasma membrane"/>
    <property type="evidence" value="ECO:0007669"/>
    <property type="project" value="UniProtKB-SubCell"/>
</dbReference>
<dbReference type="HAMAP" id="MF_00189">
    <property type="entry name" value="YciB"/>
    <property type="match status" value="1"/>
</dbReference>
<dbReference type="InterPro" id="IPR006008">
    <property type="entry name" value="YciB"/>
</dbReference>
<dbReference type="NCBIfam" id="TIGR00997">
    <property type="entry name" value="ispZ"/>
    <property type="match status" value="1"/>
</dbReference>
<dbReference type="NCBIfam" id="NF001325">
    <property type="entry name" value="PRK00259.1-3"/>
    <property type="match status" value="1"/>
</dbReference>
<dbReference type="PANTHER" id="PTHR36917:SF1">
    <property type="entry name" value="INNER MEMBRANE-SPANNING PROTEIN YCIB"/>
    <property type="match status" value="1"/>
</dbReference>
<dbReference type="PANTHER" id="PTHR36917">
    <property type="entry name" value="INTRACELLULAR SEPTATION PROTEIN A-RELATED"/>
    <property type="match status" value="1"/>
</dbReference>
<dbReference type="Pfam" id="PF04279">
    <property type="entry name" value="IspA"/>
    <property type="match status" value="1"/>
</dbReference>
<feature type="chain" id="PRO_1000098872" description="Inner membrane-spanning protein YciB">
    <location>
        <begin position="1"/>
        <end position="176"/>
    </location>
</feature>
<feature type="transmembrane region" description="Helical" evidence="1">
    <location>
        <begin position="3"/>
        <end position="23"/>
    </location>
</feature>
<feature type="transmembrane region" description="Helical" evidence="1">
    <location>
        <begin position="24"/>
        <end position="44"/>
    </location>
</feature>
<feature type="transmembrane region" description="Helical" evidence="1">
    <location>
        <begin position="49"/>
        <end position="69"/>
    </location>
</feature>
<feature type="transmembrane region" description="Helical" evidence="1">
    <location>
        <begin position="72"/>
        <end position="92"/>
    </location>
</feature>
<feature type="transmembrane region" description="Helical" evidence="1">
    <location>
        <begin position="121"/>
        <end position="141"/>
    </location>
</feature>
<feature type="transmembrane region" description="Helical" evidence="1">
    <location>
        <begin position="149"/>
        <end position="169"/>
    </location>
</feature>
<sequence length="176" mass="20112">MKFLFDLFPIILFFVAFKVWGIFTATAVAIVATLAQVAWVAFRHRKVDTMLWVSLGVIVVFGGATLVLHDEKFIQWKPTVLYWLFAIGLLAARYAFGKNLIEKMMGKQLTLPVPVWDKLNVAWALFFAVLGVANLYVVHNFTESQWVNFKLFGTTGAMVVFIILQSLWLTKYLKDE</sequence>
<reference key="1">
    <citation type="submission" date="2008-02" db="EMBL/GenBank/DDBJ databases">
        <title>Complete sequence of chromosome 1 of Burkholderia cenocepacia MC0-3.</title>
        <authorList>
            <person name="Copeland A."/>
            <person name="Lucas S."/>
            <person name="Lapidus A."/>
            <person name="Barry K."/>
            <person name="Bruce D."/>
            <person name="Goodwin L."/>
            <person name="Glavina del Rio T."/>
            <person name="Dalin E."/>
            <person name="Tice H."/>
            <person name="Pitluck S."/>
            <person name="Chain P."/>
            <person name="Malfatti S."/>
            <person name="Shin M."/>
            <person name="Vergez L."/>
            <person name="Schmutz J."/>
            <person name="Larimer F."/>
            <person name="Land M."/>
            <person name="Hauser L."/>
            <person name="Kyrpides N."/>
            <person name="Mikhailova N."/>
            <person name="Tiedje J."/>
            <person name="Richardson P."/>
        </authorList>
    </citation>
    <scope>NUCLEOTIDE SEQUENCE [LARGE SCALE GENOMIC DNA]</scope>
    <source>
        <strain>MC0-3</strain>
    </source>
</reference>
<gene>
    <name evidence="1" type="primary">yciB</name>
    <name type="ordered locus">Bcenmc03_1933</name>
</gene>
<keyword id="KW-0997">Cell inner membrane</keyword>
<keyword id="KW-1003">Cell membrane</keyword>
<keyword id="KW-0472">Membrane</keyword>
<keyword id="KW-0812">Transmembrane</keyword>
<keyword id="KW-1133">Transmembrane helix</keyword>
<comment type="function">
    <text evidence="1">Plays a role in cell envelope biogenesis, maintenance of cell envelope integrity and membrane homeostasis.</text>
</comment>
<comment type="subcellular location">
    <subcellularLocation>
        <location evidence="1">Cell inner membrane</location>
        <topology evidence="1">Multi-pass membrane protein</topology>
    </subcellularLocation>
</comment>
<comment type="similarity">
    <text evidence="1">Belongs to the YciB family.</text>
</comment>
<protein>
    <recommendedName>
        <fullName evidence="1">Inner membrane-spanning protein YciB</fullName>
    </recommendedName>
</protein>
<evidence type="ECO:0000255" key="1">
    <source>
        <dbReference type="HAMAP-Rule" id="MF_00189"/>
    </source>
</evidence>
<accession>B1JTT7</accession>
<name>YCIB_BURO0</name>
<organism>
    <name type="scientific">Burkholderia orbicola (strain MC0-3)</name>
    <dbReference type="NCBI Taxonomy" id="406425"/>
    <lineage>
        <taxon>Bacteria</taxon>
        <taxon>Pseudomonadati</taxon>
        <taxon>Pseudomonadota</taxon>
        <taxon>Betaproteobacteria</taxon>
        <taxon>Burkholderiales</taxon>
        <taxon>Burkholderiaceae</taxon>
        <taxon>Burkholderia</taxon>
        <taxon>Burkholderia cepacia complex</taxon>
        <taxon>Burkholderia orbicola</taxon>
    </lineage>
</organism>